<gene>
    <name evidence="1" type="primary">rpmC</name>
    <name type="ordered locus">Nther_0202</name>
</gene>
<name>RL29_NATTJ</name>
<evidence type="ECO:0000255" key="1">
    <source>
        <dbReference type="HAMAP-Rule" id="MF_00374"/>
    </source>
</evidence>
<evidence type="ECO:0000305" key="2"/>
<accession>B2A4E7</accession>
<keyword id="KW-1185">Reference proteome</keyword>
<keyword id="KW-0687">Ribonucleoprotein</keyword>
<keyword id="KW-0689">Ribosomal protein</keyword>
<reference key="1">
    <citation type="submission" date="2008-04" db="EMBL/GenBank/DDBJ databases">
        <title>Complete sequence of chromosome of Natranaerobius thermophilus JW/NM-WN-LF.</title>
        <authorList>
            <consortium name="US DOE Joint Genome Institute"/>
            <person name="Copeland A."/>
            <person name="Lucas S."/>
            <person name="Lapidus A."/>
            <person name="Glavina del Rio T."/>
            <person name="Dalin E."/>
            <person name="Tice H."/>
            <person name="Bruce D."/>
            <person name="Goodwin L."/>
            <person name="Pitluck S."/>
            <person name="Chertkov O."/>
            <person name="Brettin T."/>
            <person name="Detter J.C."/>
            <person name="Han C."/>
            <person name="Kuske C.R."/>
            <person name="Schmutz J."/>
            <person name="Larimer F."/>
            <person name="Land M."/>
            <person name="Hauser L."/>
            <person name="Kyrpides N."/>
            <person name="Lykidis A."/>
            <person name="Mesbah N.M."/>
            <person name="Wiegel J."/>
        </authorList>
    </citation>
    <scope>NUCLEOTIDE SEQUENCE [LARGE SCALE GENOMIC DNA]</scope>
    <source>
        <strain>ATCC BAA-1301 / DSM 18059 / JW/NM-WN-LF</strain>
    </source>
</reference>
<protein>
    <recommendedName>
        <fullName evidence="1">Large ribosomal subunit protein uL29</fullName>
    </recommendedName>
    <alternativeName>
        <fullName evidence="2">50S ribosomal protein L29</fullName>
    </alternativeName>
</protein>
<comment type="similarity">
    <text evidence="1">Belongs to the universal ribosomal protein uL29 family.</text>
</comment>
<organism>
    <name type="scientific">Natranaerobius thermophilus (strain ATCC BAA-1301 / DSM 18059 / JW/NM-WN-LF)</name>
    <dbReference type="NCBI Taxonomy" id="457570"/>
    <lineage>
        <taxon>Bacteria</taxon>
        <taxon>Bacillati</taxon>
        <taxon>Bacillota</taxon>
        <taxon>Clostridia</taxon>
        <taxon>Natranaerobiales</taxon>
        <taxon>Natranaerobiaceae</taxon>
        <taxon>Natranaerobius</taxon>
    </lineage>
</organism>
<proteinExistence type="inferred from homology"/>
<dbReference type="EMBL" id="CP001034">
    <property type="protein sequence ID" value="ACB83801.1"/>
    <property type="molecule type" value="Genomic_DNA"/>
</dbReference>
<dbReference type="RefSeq" id="WP_012446690.1">
    <property type="nucleotide sequence ID" value="NC_010718.1"/>
</dbReference>
<dbReference type="SMR" id="B2A4E7"/>
<dbReference type="FunCoup" id="B2A4E7">
    <property type="interactions" value="359"/>
</dbReference>
<dbReference type="STRING" id="457570.Nther_0202"/>
<dbReference type="KEGG" id="nth:Nther_0202"/>
<dbReference type="eggNOG" id="COG0255">
    <property type="taxonomic scope" value="Bacteria"/>
</dbReference>
<dbReference type="HOGENOM" id="CLU_158491_5_2_9"/>
<dbReference type="InParanoid" id="B2A4E7"/>
<dbReference type="OrthoDB" id="9815192at2"/>
<dbReference type="Proteomes" id="UP000001683">
    <property type="component" value="Chromosome"/>
</dbReference>
<dbReference type="GO" id="GO:0022625">
    <property type="term" value="C:cytosolic large ribosomal subunit"/>
    <property type="evidence" value="ECO:0007669"/>
    <property type="project" value="TreeGrafter"/>
</dbReference>
<dbReference type="GO" id="GO:0003735">
    <property type="term" value="F:structural constituent of ribosome"/>
    <property type="evidence" value="ECO:0007669"/>
    <property type="project" value="InterPro"/>
</dbReference>
<dbReference type="GO" id="GO:0006412">
    <property type="term" value="P:translation"/>
    <property type="evidence" value="ECO:0007669"/>
    <property type="project" value="UniProtKB-UniRule"/>
</dbReference>
<dbReference type="CDD" id="cd00427">
    <property type="entry name" value="Ribosomal_L29_HIP"/>
    <property type="match status" value="1"/>
</dbReference>
<dbReference type="FunFam" id="1.10.287.310:FF:000001">
    <property type="entry name" value="50S ribosomal protein L29"/>
    <property type="match status" value="1"/>
</dbReference>
<dbReference type="Gene3D" id="1.10.287.310">
    <property type="match status" value="1"/>
</dbReference>
<dbReference type="HAMAP" id="MF_00374">
    <property type="entry name" value="Ribosomal_uL29"/>
    <property type="match status" value="1"/>
</dbReference>
<dbReference type="InterPro" id="IPR050063">
    <property type="entry name" value="Ribosomal_protein_uL29"/>
</dbReference>
<dbReference type="InterPro" id="IPR001854">
    <property type="entry name" value="Ribosomal_uL29"/>
</dbReference>
<dbReference type="InterPro" id="IPR018254">
    <property type="entry name" value="Ribosomal_uL29_CS"/>
</dbReference>
<dbReference type="InterPro" id="IPR036049">
    <property type="entry name" value="Ribosomal_uL29_sf"/>
</dbReference>
<dbReference type="NCBIfam" id="TIGR00012">
    <property type="entry name" value="L29"/>
    <property type="match status" value="1"/>
</dbReference>
<dbReference type="PANTHER" id="PTHR10916">
    <property type="entry name" value="60S RIBOSOMAL PROTEIN L35/50S RIBOSOMAL PROTEIN L29"/>
    <property type="match status" value="1"/>
</dbReference>
<dbReference type="PANTHER" id="PTHR10916:SF0">
    <property type="entry name" value="LARGE RIBOSOMAL SUBUNIT PROTEIN UL29C"/>
    <property type="match status" value="1"/>
</dbReference>
<dbReference type="Pfam" id="PF00831">
    <property type="entry name" value="Ribosomal_L29"/>
    <property type="match status" value="1"/>
</dbReference>
<dbReference type="SUPFAM" id="SSF46561">
    <property type="entry name" value="Ribosomal protein L29 (L29p)"/>
    <property type="match status" value="1"/>
</dbReference>
<dbReference type="PROSITE" id="PS00579">
    <property type="entry name" value="RIBOSOMAL_L29"/>
    <property type="match status" value="1"/>
</dbReference>
<sequence length="65" mass="7812">MKAKEIREMTNRELEAKLDELKEELFNLRFQVATGQIENPMRLKQVRKDIARVKTILRERELNIS</sequence>
<feature type="chain" id="PRO_1000121791" description="Large ribosomal subunit protein uL29">
    <location>
        <begin position="1"/>
        <end position="65"/>
    </location>
</feature>